<proteinExistence type="inferred from homology"/>
<evidence type="ECO:0000255" key="1">
    <source>
        <dbReference type="HAMAP-Rule" id="MF_00791"/>
    </source>
</evidence>
<sequence>MYRALTRDIEVTVDPYYLEEQSDPDDDRYVWGYKVVIANNSDVPVKLVNRYWHITDQNGQVDEVYGPGVVGEQPQLKPGDSYEYSSGCPLDTPSGLMFGHYEMETENGEVFNVTIPAFSLDSPGLMRVLN</sequence>
<feature type="chain" id="PRO_0000197936" description="Protein ApaG">
    <location>
        <begin position="1"/>
        <end position="130"/>
    </location>
</feature>
<feature type="domain" description="ApaG" evidence="1">
    <location>
        <begin position="3"/>
        <end position="127"/>
    </location>
</feature>
<gene>
    <name evidence="1" type="primary">apaG</name>
    <name type="ordered locus">Atu0431</name>
    <name type="ORF">AGR_C_759</name>
</gene>
<reference key="1">
    <citation type="journal article" date="2001" name="Science">
        <title>The genome of the natural genetic engineer Agrobacterium tumefaciens C58.</title>
        <authorList>
            <person name="Wood D.W."/>
            <person name="Setubal J.C."/>
            <person name="Kaul R."/>
            <person name="Monks D.E."/>
            <person name="Kitajima J.P."/>
            <person name="Okura V.K."/>
            <person name="Zhou Y."/>
            <person name="Chen L."/>
            <person name="Wood G.E."/>
            <person name="Almeida N.F. Jr."/>
            <person name="Woo L."/>
            <person name="Chen Y."/>
            <person name="Paulsen I.T."/>
            <person name="Eisen J.A."/>
            <person name="Karp P.D."/>
            <person name="Bovee D. Sr."/>
            <person name="Chapman P."/>
            <person name="Clendenning J."/>
            <person name="Deatherage G."/>
            <person name="Gillet W."/>
            <person name="Grant C."/>
            <person name="Kutyavin T."/>
            <person name="Levy R."/>
            <person name="Li M.-J."/>
            <person name="McClelland E."/>
            <person name="Palmieri A."/>
            <person name="Raymond C."/>
            <person name="Rouse G."/>
            <person name="Saenphimmachak C."/>
            <person name="Wu Z."/>
            <person name="Romero P."/>
            <person name="Gordon D."/>
            <person name="Zhang S."/>
            <person name="Yoo H."/>
            <person name="Tao Y."/>
            <person name="Biddle P."/>
            <person name="Jung M."/>
            <person name="Krespan W."/>
            <person name="Perry M."/>
            <person name="Gordon-Kamm B."/>
            <person name="Liao L."/>
            <person name="Kim S."/>
            <person name="Hendrick C."/>
            <person name="Zhao Z.-Y."/>
            <person name="Dolan M."/>
            <person name="Chumley F."/>
            <person name="Tingey S.V."/>
            <person name="Tomb J.-F."/>
            <person name="Gordon M.P."/>
            <person name="Olson M.V."/>
            <person name="Nester E.W."/>
        </authorList>
    </citation>
    <scope>NUCLEOTIDE SEQUENCE [LARGE SCALE GENOMIC DNA]</scope>
    <source>
        <strain>C58 / ATCC 33970</strain>
    </source>
</reference>
<reference key="2">
    <citation type="journal article" date="2001" name="Science">
        <title>Genome sequence of the plant pathogen and biotechnology agent Agrobacterium tumefaciens C58.</title>
        <authorList>
            <person name="Goodner B."/>
            <person name="Hinkle G."/>
            <person name="Gattung S."/>
            <person name="Miller N."/>
            <person name="Blanchard M."/>
            <person name="Qurollo B."/>
            <person name="Goldman B.S."/>
            <person name="Cao Y."/>
            <person name="Askenazi M."/>
            <person name="Halling C."/>
            <person name="Mullin L."/>
            <person name="Houmiel K."/>
            <person name="Gordon J."/>
            <person name="Vaudin M."/>
            <person name="Iartchouk O."/>
            <person name="Epp A."/>
            <person name="Liu F."/>
            <person name="Wollam C."/>
            <person name="Allinger M."/>
            <person name="Doughty D."/>
            <person name="Scott C."/>
            <person name="Lappas C."/>
            <person name="Markelz B."/>
            <person name="Flanagan C."/>
            <person name="Crowell C."/>
            <person name="Gurson J."/>
            <person name="Lomo C."/>
            <person name="Sear C."/>
            <person name="Strub G."/>
            <person name="Cielo C."/>
            <person name="Slater S."/>
        </authorList>
    </citation>
    <scope>NUCLEOTIDE SEQUENCE [LARGE SCALE GENOMIC DNA]</scope>
    <source>
        <strain>C58 / ATCC 33970</strain>
    </source>
</reference>
<dbReference type="EMBL" id="AE007869">
    <property type="protein sequence ID" value="AAK86244.2"/>
    <property type="molecule type" value="Genomic_DNA"/>
</dbReference>
<dbReference type="PIR" id="AE2629">
    <property type="entry name" value="AE2629"/>
</dbReference>
<dbReference type="PIR" id="C97411">
    <property type="entry name" value="C97411"/>
</dbReference>
<dbReference type="RefSeq" id="NP_353459.2">
    <property type="nucleotide sequence ID" value="NC_003062.2"/>
</dbReference>
<dbReference type="RefSeq" id="WP_010970890.1">
    <property type="nucleotide sequence ID" value="NC_003062.2"/>
</dbReference>
<dbReference type="SMR" id="Q8UI68"/>
<dbReference type="STRING" id="176299.Atu0431"/>
<dbReference type="EnsemblBacteria" id="AAK86244">
    <property type="protein sequence ID" value="AAK86244"/>
    <property type="gene ID" value="Atu0431"/>
</dbReference>
<dbReference type="GeneID" id="1132469"/>
<dbReference type="KEGG" id="atu:Atu0431"/>
<dbReference type="PATRIC" id="fig|176299.10.peg.422"/>
<dbReference type="eggNOG" id="COG2967">
    <property type="taxonomic scope" value="Bacteria"/>
</dbReference>
<dbReference type="HOGENOM" id="CLU_128074_1_0_5"/>
<dbReference type="OrthoDB" id="9795226at2"/>
<dbReference type="PhylomeDB" id="Q8UI68"/>
<dbReference type="Proteomes" id="UP000000813">
    <property type="component" value="Chromosome circular"/>
</dbReference>
<dbReference type="Gene3D" id="2.60.40.1470">
    <property type="entry name" value="ApaG domain"/>
    <property type="match status" value="1"/>
</dbReference>
<dbReference type="HAMAP" id="MF_00791">
    <property type="entry name" value="ApaG"/>
    <property type="match status" value="1"/>
</dbReference>
<dbReference type="InterPro" id="IPR050718">
    <property type="entry name" value="ApaG-like"/>
</dbReference>
<dbReference type="InterPro" id="IPR007474">
    <property type="entry name" value="ApaG_domain"/>
</dbReference>
<dbReference type="InterPro" id="IPR036767">
    <property type="entry name" value="ApaG_sf"/>
</dbReference>
<dbReference type="InterPro" id="IPR023065">
    <property type="entry name" value="Uncharacterised_ApaG"/>
</dbReference>
<dbReference type="NCBIfam" id="NF003967">
    <property type="entry name" value="PRK05461.1"/>
    <property type="match status" value="1"/>
</dbReference>
<dbReference type="PANTHER" id="PTHR47191">
    <property type="entry name" value="OS05G0170800 PROTEIN"/>
    <property type="match status" value="1"/>
</dbReference>
<dbReference type="PANTHER" id="PTHR47191:SF2">
    <property type="entry name" value="OS05G0170800 PROTEIN"/>
    <property type="match status" value="1"/>
</dbReference>
<dbReference type="Pfam" id="PF04379">
    <property type="entry name" value="DUF525"/>
    <property type="match status" value="1"/>
</dbReference>
<dbReference type="SUPFAM" id="SSF110069">
    <property type="entry name" value="ApaG-like"/>
    <property type="match status" value="1"/>
</dbReference>
<dbReference type="PROSITE" id="PS51087">
    <property type="entry name" value="APAG"/>
    <property type="match status" value="1"/>
</dbReference>
<accession>Q8UI68</accession>
<accession>Q7D1H1</accession>
<name>APAG_AGRFC</name>
<organism>
    <name type="scientific">Agrobacterium fabrum (strain C58 / ATCC 33970)</name>
    <name type="common">Agrobacterium tumefaciens (strain C58)</name>
    <dbReference type="NCBI Taxonomy" id="176299"/>
    <lineage>
        <taxon>Bacteria</taxon>
        <taxon>Pseudomonadati</taxon>
        <taxon>Pseudomonadota</taxon>
        <taxon>Alphaproteobacteria</taxon>
        <taxon>Hyphomicrobiales</taxon>
        <taxon>Rhizobiaceae</taxon>
        <taxon>Rhizobium/Agrobacterium group</taxon>
        <taxon>Agrobacterium</taxon>
        <taxon>Agrobacterium tumefaciens complex</taxon>
    </lineage>
</organism>
<keyword id="KW-1185">Reference proteome</keyword>
<protein>
    <recommendedName>
        <fullName evidence="1">Protein ApaG</fullName>
    </recommendedName>
</protein>